<protein>
    <recommendedName>
        <fullName evidence="1">Ribosome-binding factor A</fullName>
    </recommendedName>
</protein>
<sequence length="116" mass="13350">MVNHFRIDRVGMEIKREVNEILQKKVRDPRVQGVTITDVQMLGDLSVAKVYYTILSNLASDNQKAQIGLEKATGTIKRELGRNLKLYKIPDLTFVKDESIEYGNKIDEMLRNLDKN</sequence>
<dbReference type="EMBL" id="CP000410">
    <property type="protein sequence ID" value="ABJ54051.1"/>
    <property type="molecule type" value="Genomic_DNA"/>
</dbReference>
<dbReference type="RefSeq" id="WP_000247133.1">
    <property type="nucleotide sequence ID" value="NZ_JAMLJR010000001.1"/>
</dbReference>
<dbReference type="SMR" id="Q04LV9"/>
<dbReference type="PaxDb" id="373153-SPD_0483"/>
<dbReference type="KEGG" id="spd:SPD_0483"/>
<dbReference type="eggNOG" id="COG0858">
    <property type="taxonomic scope" value="Bacteria"/>
</dbReference>
<dbReference type="HOGENOM" id="CLU_089475_3_0_9"/>
<dbReference type="BioCyc" id="SPNE373153:G1G6V-532-MONOMER"/>
<dbReference type="Proteomes" id="UP000001452">
    <property type="component" value="Chromosome"/>
</dbReference>
<dbReference type="GO" id="GO:0005829">
    <property type="term" value="C:cytosol"/>
    <property type="evidence" value="ECO:0007669"/>
    <property type="project" value="TreeGrafter"/>
</dbReference>
<dbReference type="GO" id="GO:0043024">
    <property type="term" value="F:ribosomal small subunit binding"/>
    <property type="evidence" value="ECO:0007669"/>
    <property type="project" value="TreeGrafter"/>
</dbReference>
<dbReference type="GO" id="GO:0030490">
    <property type="term" value="P:maturation of SSU-rRNA"/>
    <property type="evidence" value="ECO:0007669"/>
    <property type="project" value="UniProtKB-UniRule"/>
</dbReference>
<dbReference type="FunFam" id="3.30.300.20:FF:000012">
    <property type="entry name" value="Ribosome-binding factor A"/>
    <property type="match status" value="1"/>
</dbReference>
<dbReference type="Gene3D" id="3.30.300.20">
    <property type="match status" value="1"/>
</dbReference>
<dbReference type="HAMAP" id="MF_00003">
    <property type="entry name" value="RbfA"/>
    <property type="match status" value="1"/>
</dbReference>
<dbReference type="InterPro" id="IPR015946">
    <property type="entry name" value="KH_dom-like_a/b"/>
</dbReference>
<dbReference type="InterPro" id="IPR000238">
    <property type="entry name" value="RbfA"/>
</dbReference>
<dbReference type="InterPro" id="IPR023799">
    <property type="entry name" value="RbfA_dom_sf"/>
</dbReference>
<dbReference type="InterPro" id="IPR020053">
    <property type="entry name" value="Ribosome-bd_factorA_CS"/>
</dbReference>
<dbReference type="NCBIfam" id="TIGR00082">
    <property type="entry name" value="rbfA"/>
    <property type="match status" value="1"/>
</dbReference>
<dbReference type="PANTHER" id="PTHR33515">
    <property type="entry name" value="RIBOSOME-BINDING FACTOR A, CHLOROPLASTIC-RELATED"/>
    <property type="match status" value="1"/>
</dbReference>
<dbReference type="PANTHER" id="PTHR33515:SF1">
    <property type="entry name" value="RIBOSOME-BINDING FACTOR A, CHLOROPLASTIC-RELATED"/>
    <property type="match status" value="1"/>
</dbReference>
<dbReference type="Pfam" id="PF02033">
    <property type="entry name" value="RBFA"/>
    <property type="match status" value="1"/>
</dbReference>
<dbReference type="SUPFAM" id="SSF89919">
    <property type="entry name" value="Ribosome-binding factor A, RbfA"/>
    <property type="match status" value="1"/>
</dbReference>
<dbReference type="PROSITE" id="PS01319">
    <property type="entry name" value="RBFA"/>
    <property type="match status" value="1"/>
</dbReference>
<proteinExistence type="inferred from homology"/>
<evidence type="ECO:0000255" key="1">
    <source>
        <dbReference type="HAMAP-Rule" id="MF_00003"/>
    </source>
</evidence>
<reference key="1">
    <citation type="journal article" date="2007" name="J. Bacteriol.">
        <title>Genome sequence of Avery's virulent serotype 2 strain D39 of Streptococcus pneumoniae and comparison with that of unencapsulated laboratory strain R6.</title>
        <authorList>
            <person name="Lanie J.A."/>
            <person name="Ng W.-L."/>
            <person name="Kazmierczak K.M."/>
            <person name="Andrzejewski T.M."/>
            <person name="Davidsen T.M."/>
            <person name="Wayne K.J."/>
            <person name="Tettelin H."/>
            <person name="Glass J.I."/>
            <person name="Winkler M.E."/>
        </authorList>
    </citation>
    <scope>NUCLEOTIDE SEQUENCE [LARGE SCALE GENOMIC DNA]</scope>
    <source>
        <strain>D39 / NCTC 7466</strain>
    </source>
</reference>
<comment type="function">
    <text evidence="1">One of several proteins that assist in the late maturation steps of the functional core of the 30S ribosomal subunit. Associates with free 30S ribosomal subunits (but not with 30S subunits that are part of 70S ribosomes or polysomes). Required for efficient processing of 16S rRNA. May interact with the 5'-terminal helix region of 16S rRNA.</text>
</comment>
<comment type="subunit">
    <text evidence="1">Monomer. Binds 30S ribosomal subunits, but not 50S ribosomal subunits or 70S ribosomes.</text>
</comment>
<comment type="subcellular location">
    <subcellularLocation>
        <location evidence="1">Cytoplasm</location>
    </subcellularLocation>
</comment>
<comment type="similarity">
    <text evidence="1">Belongs to the RbfA family.</text>
</comment>
<organism>
    <name type="scientific">Streptococcus pneumoniae serotype 2 (strain D39 / NCTC 7466)</name>
    <dbReference type="NCBI Taxonomy" id="373153"/>
    <lineage>
        <taxon>Bacteria</taxon>
        <taxon>Bacillati</taxon>
        <taxon>Bacillota</taxon>
        <taxon>Bacilli</taxon>
        <taxon>Lactobacillales</taxon>
        <taxon>Streptococcaceae</taxon>
        <taxon>Streptococcus</taxon>
    </lineage>
</organism>
<keyword id="KW-0963">Cytoplasm</keyword>
<keyword id="KW-1185">Reference proteome</keyword>
<keyword id="KW-0690">Ribosome biogenesis</keyword>
<name>RBFA_STRP2</name>
<gene>
    <name evidence="1" type="primary">rbfA</name>
    <name type="ordered locus">SPD_0483</name>
</gene>
<accession>Q04LV9</accession>
<feature type="chain" id="PRO_1000000226" description="Ribosome-binding factor A">
    <location>
        <begin position="1"/>
        <end position="116"/>
    </location>
</feature>